<name>RL32_MYCAP</name>
<protein>
    <recommendedName>
        <fullName evidence="1">Large ribosomal subunit protein bL32</fullName>
    </recommendedName>
    <alternativeName>
        <fullName evidence="3">50S ribosomal protein L32</fullName>
    </alternativeName>
</protein>
<organism>
    <name type="scientific">Mycoplasmopsis agalactiae (strain NCTC 10123 / CIP 59.7 / PG2)</name>
    <name type="common">Mycoplasma agalactiae</name>
    <dbReference type="NCBI Taxonomy" id="347257"/>
    <lineage>
        <taxon>Bacteria</taxon>
        <taxon>Bacillati</taxon>
        <taxon>Mycoplasmatota</taxon>
        <taxon>Mycoplasmoidales</taxon>
        <taxon>Metamycoplasmataceae</taxon>
        <taxon>Mycoplasmopsis</taxon>
    </lineage>
</organism>
<evidence type="ECO:0000255" key="1">
    <source>
        <dbReference type="HAMAP-Rule" id="MF_00340"/>
    </source>
</evidence>
<evidence type="ECO:0000256" key="2">
    <source>
        <dbReference type="SAM" id="MobiDB-lite"/>
    </source>
</evidence>
<evidence type="ECO:0000305" key="3"/>
<sequence length="66" mass="7699">MAIVPKRKTSKQRKHKRRTNDALPVQNLISCKNCSNMIQQHRVCEHCGFYKGKKVEGYKSLNLRAQ</sequence>
<keyword id="KW-1185">Reference proteome</keyword>
<keyword id="KW-0687">Ribonucleoprotein</keyword>
<keyword id="KW-0689">Ribosomal protein</keyword>
<comment type="similarity">
    <text evidence="1">Belongs to the bacterial ribosomal protein bL32 family.</text>
</comment>
<proteinExistence type="inferred from homology"/>
<accession>A5IXR8</accession>
<reference key="1">
    <citation type="journal article" date="2007" name="PLoS Genet.">
        <title>Being pathogenic, plastic, and sexual while living with a nearly minimal bacterial genome.</title>
        <authorList>
            <person name="Sirand-Pugnet P."/>
            <person name="Lartigue C."/>
            <person name="Marenda M."/>
            <person name="Jacob D."/>
            <person name="Barre A."/>
            <person name="Barbe V."/>
            <person name="Schenowitz C."/>
            <person name="Mangenot S."/>
            <person name="Couloux A."/>
            <person name="Segurens B."/>
            <person name="de Daruvar A."/>
            <person name="Blanchard A."/>
            <person name="Citti C."/>
        </authorList>
    </citation>
    <scope>NUCLEOTIDE SEQUENCE [LARGE SCALE GENOMIC DNA]</scope>
    <source>
        <strain>NCTC 10123 / CIP 59.7 / PG2</strain>
    </source>
</reference>
<feature type="chain" id="PRO_1000195987" description="Large ribosomal subunit protein bL32">
    <location>
        <begin position="1"/>
        <end position="66"/>
    </location>
</feature>
<feature type="region of interest" description="Disordered" evidence="2">
    <location>
        <begin position="1"/>
        <end position="21"/>
    </location>
</feature>
<feature type="compositionally biased region" description="Basic residues" evidence="2">
    <location>
        <begin position="1"/>
        <end position="18"/>
    </location>
</feature>
<gene>
    <name evidence="1" type="primary">rpmF</name>
    <name type="ordered locus">MAG1290</name>
</gene>
<dbReference type="EMBL" id="CU179680">
    <property type="protein sequence ID" value="CAL58827.1"/>
    <property type="molecule type" value="Genomic_DNA"/>
</dbReference>
<dbReference type="RefSeq" id="WP_011949309.1">
    <property type="nucleotide sequence ID" value="NC_009497.1"/>
</dbReference>
<dbReference type="SMR" id="A5IXR8"/>
<dbReference type="STRING" id="347257.MAG1290"/>
<dbReference type="GeneID" id="93357895"/>
<dbReference type="KEGG" id="maa:MAG1290"/>
<dbReference type="HOGENOM" id="CLU_129084_1_3_14"/>
<dbReference type="Proteomes" id="UP000007065">
    <property type="component" value="Chromosome"/>
</dbReference>
<dbReference type="GO" id="GO:0015934">
    <property type="term" value="C:large ribosomal subunit"/>
    <property type="evidence" value="ECO:0007669"/>
    <property type="project" value="InterPro"/>
</dbReference>
<dbReference type="GO" id="GO:0003735">
    <property type="term" value="F:structural constituent of ribosome"/>
    <property type="evidence" value="ECO:0007669"/>
    <property type="project" value="InterPro"/>
</dbReference>
<dbReference type="GO" id="GO:0006412">
    <property type="term" value="P:translation"/>
    <property type="evidence" value="ECO:0007669"/>
    <property type="project" value="UniProtKB-UniRule"/>
</dbReference>
<dbReference type="HAMAP" id="MF_00340">
    <property type="entry name" value="Ribosomal_bL32"/>
    <property type="match status" value="1"/>
</dbReference>
<dbReference type="InterPro" id="IPR002677">
    <property type="entry name" value="Ribosomal_bL32"/>
</dbReference>
<dbReference type="InterPro" id="IPR044957">
    <property type="entry name" value="Ribosomal_bL32_bact"/>
</dbReference>
<dbReference type="InterPro" id="IPR011332">
    <property type="entry name" value="Ribosomal_zn-bd"/>
</dbReference>
<dbReference type="NCBIfam" id="TIGR01031">
    <property type="entry name" value="rpmF_bact"/>
    <property type="match status" value="1"/>
</dbReference>
<dbReference type="PANTHER" id="PTHR35534">
    <property type="entry name" value="50S RIBOSOMAL PROTEIN L32"/>
    <property type="match status" value="1"/>
</dbReference>
<dbReference type="PANTHER" id="PTHR35534:SF1">
    <property type="entry name" value="LARGE RIBOSOMAL SUBUNIT PROTEIN BL32"/>
    <property type="match status" value="1"/>
</dbReference>
<dbReference type="Pfam" id="PF01783">
    <property type="entry name" value="Ribosomal_L32p"/>
    <property type="match status" value="1"/>
</dbReference>
<dbReference type="SUPFAM" id="SSF57829">
    <property type="entry name" value="Zn-binding ribosomal proteins"/>
    <property type="match status" value="1"/>
</dbReference>